<dbReference type="EMBL" id="AJ131567">
    <property type="protein sequence ID" value="CAA10421.1"/>
    <property type="molecule type" value="Genomic_DNA"/>
</dbReference>
<dbReference type="SMR" id="Q9WJE9"/>
<dbReference type="Proteomes" id="UP000007535">
    <property type="component" value="Segment"/>
</dbReference>
<dbReference type="GO" id="GO:0005576">
    <property type="term" value="C:extracellular region"/>
    <property type="evidence" value="ECO:0007669"/>
    <property type="project" value="UniProtKB-SubCell"/>
</dbReference>
<dbReference type="GO" id="GO:0043657">
    <property type="term" value="C:host cell"/>
    <property type="evidence" value="ECO:0007669"/>
    <property type="project" value="GOC"/>
</dbReference>
<dbReference type="GO" id="GO:0030430">
    <property type="term" value="C:host cell cytoplasm"/>
    <property type="evidence" value="ECO:0007669"/>
    <property type="project" value="UniProtKB-UniRule"/>
</dbReference>
<dbReference type="GO" id="GO:0042025">
    <property type="term" value="C:host cell nucleus"/>
    <property type="evidence" value="ECO:0007669"/>
    <property type="project" value="UniProtKB-SubCell"/>
</dbReference>
<dbReference type="GO" id="GO:0039619">
    <property type="term" value="C:T=4 icosahedral viral capsid"/>
    <property type="evidence" value="ECO:0007669"/>
    <property type="project" value="UniProtKB-UniRule"/>
</dbReference>
<dbReference type="GO" id="GO:0003677">
    <property type="term" value="F:DNA binding"/>
    <property type="evidence" value="ECO:0007669"/>
    <property type="project" value="UniProtKB-UniRule"/>
</dbReference>
<dbReference type="GO" id="GO:0003723">
    <property type="term" value="F:RNA binding"/>
    <property type="evidence" value="ECO:0007669"/>
    <property type="project" value="UniProtKB-UniRule"/>
</dbReference>
<dbReference type="GO" id="GO:0005198">
    <property type="term" value="F:structural molecule activity"/>
    <property type="evidence" value="ECO:0007669"/>
    <property type="project" value="UniProtKB-UniRule"/>
</dbReference>
<dbReference type="GO" id="GO:0075521">
    <property type="term" value="P:microtubule-dependent intracellular transport of viral material towards nucleus"/>
    <property type="evidence" value="ECO:0007669"/>
    <property type="project" value="UniProtKB-UniRule"/>
</dbReference>
<dbReference type="GO" id="GO:0046718">
    <property type="term" value="P:symbiont entry into host cell"/>
    <property type="evidence" value="ECO:0007669"/>
    <property type="project" value="UniProtKB-UniRule"/>
</dbReference>
<dbReference type="GO" id="GO:0075732">
    <property type="term" value="P:viral penetration into host nucleus"/>
    <property type="evidence" value="ECO:0007669"/>
    <property type="project" value="UniProtKB-UniRule"/>
</dbReference>
<dbReference type="FunFam" id="1.10.4090.10:FF:000001">
    <property type="entry name" value="Capsid protein"/>
    <property type="match status" value="1"/>
</dbReference>
<dbReference type="Gene3D" id="1.10.4090.10">
    <property type="entry name" value="Viral capsid, core domain supefamily, Hepatitis B virus"/>
    <property type="match status" value="1"/>
</dbReference>
<dbReference type="HAMAP" id="MF_04076">
    <property type="entry name" value="HBV_HBEAG"/>
    <property type="match status" value="1"/>
</dbReference>
<dbReference type="InterPro" id="IPR013195">
    <property type="entry name" value="Hepatitis_B_virus_capsid_N"/>
</dbReference>
<dbReference type="InterPro" id="IPR002006">
    <property type="entry name" value="Hepatitis_core"/>
</dbReference>
<dbReference type="InterPro" id="IPR036459">
    <property type="entry name" value="Viral_capsid_core_dom_sf_HBV"/>
</dbReference>
<dbReference type="Pfam" id="PF08290">
    <property type="entry name" value="Hep_core_N"/>
    <property type="match status" value="1"/>
</dbReference>
<dbReference type="Pfam" id="PF00906">
    <property type="entry name" value="Hepatitis_core"/>
    <property type="match status" value="3"/>
</dbReference>
<dbReference type="SUPFAM" id="SSF47852">
    <property type="entry name" value="Hepatitis B viral capsid (hbcag)"/>
    <property type="match status" value="1"/>
</dbReference>
<feature type="signal peptide" evidence="2">
    <location>
        <begin position="1"/>
        <end position="19"/>
    </location>
</feature>
<feature type="chain" id="PRO_5000064711" description="External core antigen" evidence="2">
    <location>
        <begin position="20"/>
        <end position="212"/>
    </location>
</feature>
<feature type="propeptide" id="PRO_0000324737" evidence="1">
    <location>
        <begin position="184"/>
        <end position="212"/>
    </location>
</feature>
<feature type="repeat" description="1; half-length">
    <location>
        <begin position="184"/>
        <end position="190"/>
    </location>
</feature>
<feature type="repeat" description="2">
    <location>
        <begin position="191"/>
        <end position="198"/>
    </location>
</feature>
<feature type="repeat" description="3">
    <location>
        <begin position="199"/>
        <end position="206"/>
    </location>
</feature>
<feature type="region of interest" description="HBEAG" evidence="2">
    <location>
        <begin position="25"/>
        <end position="27"/>
    </location>
</feature>
<feature type="region of interest" description="Disordered" evidence="3">
    <location>
        <begin position="172"/>
        <end position="212"/>
    </location>
</feature>
<feature type="region of interest" description="3 X 8 AA repeats of S-P-R-R-R-R-S-Q">
    <location>
        <begin position="184"/>
        <end position="206"/>
    </location>
</feature>
<feature type="compositionally biased region" description="Basic residues" evidence="3">
    <location>
        <begin position="178"/>
        <end position="205"/>
    </location>
</feature>
<feature type="site" description="Cleavage; by host" evidence="2">
    <location>
        <begin position="183"/>
        <end position="184"/>
    </location>
</feature>
<feature type="disulfide bond" description="Interchain" evidence="2">
    <location>
        <position position="77"/>
    </location>
</feature>
<feature type="disulfide bond" description="Interchain" evidence="2">
    <location>
        <position position="90"/>
    </location>
</feature>
<proteinExistence type="inferred from homology"/>
<sequence>MQLFHLCLIISCSCPTVQASKLCLGWLLGMDIDPYKEFGATVELLSFLPSDFFPSVRDLLDTASALYREALESPEHCSPNHTALRQAILCWGELMTLASWVGNNLEDPASREQVVNYVNTNMGLKIRQLLWFHISCLTFGRETVLEYLVSFGVWIRTPPAYRPPNAPILSTLPETAVVRRRGRSPRRRTPSPRRRRSQSPRRRRSQSPASQC</sequence>
<protein>
    <recommendedName>
        <fullName evidence="2">External core antigen</fullName>
    </recommendedName>
    <alternativeName>
        <fullName evidence="2">HBeAg</fullName>
    </alternativeName>
    <alternativeName>
        <fullName evidence="2">Precore protein</fullName>
    </alternativeName>
    <alternativeName>
        <fullName evidence="2">p25</fullName>
    </alternativeName>
</protein>
<evidence type="ECO:0000250" key="1"/>
<evidence type="ECO:0000255" key="2">
    <source>
        <dbReference type="HAMAP-Rule" id="MF_04076"/>
    </source>
</evidence>
<evidence type="ECO:0000256" key="3">
    <source>
        <dbReference type="SAM" id="MobiDB-lite"/>
    </source>
</evidence>
<accession>Q9WJE9</accession>
<comment type="function">
    <text evidence="2">May regulate immune response to the intracellular capsid in acting as a T-cell tolerogen, by having an immunoregulatory effect which prevents destruction of infected cells by cytotoxic T-cells. This immune regulation may predispose to chronicity during perinatal infections and prevent severe liver injury during adult infections.</text>
</comment>
<comment type="subunit">
    <text evidence="2">Homodimerizes.</text>
</comment>
<comment type="subcellular location">
    <subcellularLocation>
        <location evidence="2">Secreted</location>
    </subcellularLocation>
    <subcellularLocation>
        <location evidence="2">Host nucleus</location>
    </subcellularLocation>
</comment>
<comment type="alternative products">
    <event type="alternative initiation"/>
    <isoform>
        <id>Q9WJE9-1</id>
        <name>External core antigen</name>
        <sequence type="displayed"/>
    </isoform>
    <isoform>
        <id>P0C6I9-1</id>
        <name>Capsid protein</name>
        <sequence type="external"/>
    </isoform>
</comment>
<comment type="PTM">
    <text evidence="2">Phosphorylated.</text>
</comment>
<comment type="PTM">
    <text evidence="2">Cleaved by host furin.</text>
</comment>
<comment type="similarity">
    <text evidence="2">Belongs to the orthohepadnavirus precore antigen family.</text>
</comment>
<keyword id="KW-0024">Alternative initiation</keyword>
<keyword id="KW-1015">Disulfide bond</keyword>
<keyword id="KW-1048">Host nucleus</keyword>
<keyword id="KW-0945">Host-virus interaction</keyword>
<keyword id="KW-0677">Repeat</keyword>
<keyword id="KW-0964">Secreted</keyword>
<keyword id="KW-0732">Signal</keyword>
<keyword id="KW-0899">Viral immunoevasion</keyword>
<organismHost>
    <name type="scientific">Gorilla gorilla</name>
    <name type="common">western gorilla</name>
    <dbReference type="NCBI Taxonomy" id="9593"/>
</organismHost>
<organism>
    <name type="scientific">Gorilla hepatitis B virus (isolate Cameroon/gor97)</name>
    <name type="common">HBVgor</name>
    <dbReference type="NCBI Taxonomy" id="489546"/>
    <lineage>
        <taxon>Viruses</taxon>
        <taxon>Riboviria</taxon>
        <taxon>Pararnavirae</taxon>
        <taxon>Artverviricota</taxon>
        <taxon>Revtraviricetes</taxon>
        <taxon>Blubervirales</taxon>
        <taxon>Hepadnaviridae</taxon>
        <taxon>Orthohepadnavirus</taxon>
        <taxon>Hepatitis B virus</taxon>
    </lineage>
</organism>
<gene>
    <name evidence="2" type="primary">C</name>
</gene>
<reference key="1">
    <citation type="journal article" date="2000" name="J. Virol.">
        <title>Molecular epidemiology of hepatitis B virus variants in nonhuman primates.</title>
        <authorList>
            <person name="Grethe S."/>
            <person name="Heckel J.O."/>
            <person name="Rietschel W."/>
            <person name="Hufert F.T."/>
        </authorList>
    </citation>
    <scope>NUCLEOTIDE SEQUENCE [GENOMIC DNA]</scope>
</reference>
<name>HBEAG_HBVGO</name>